<comment type="function">
    <text evidence="1">One of the primary rRNA binding proteins, it binds directly to 16S rRNA where it nucleates assembly of the head domain of the 30S subunit.</text>
</comment>
<comment type="subunit">
    <text>Part of the 30S ribosomal subunit.</text>
</comment>
<comment type="subcellular location">
    <subcellularLocation>
        <location>Plastid</location>
        <location>Chloroplast</location>
    </subcellularLocation>
</comment>
<comment type="similarity">
    <text evidence="3">Belongs to the universal ribosomal protein uS7 family.</text>
</comment>
<sequence>MSRRGTAEEKTAKSDPIYRNRLVNMLVNRILKHGKKSLAYQIIYRAVKKIQQKTETNPLSVLRQAIRGVTPDIAVKARRVGGSTHQVPIEIGSTQGKALAIRWLLGASRKRPGRNMAFKLSSELVDAAKGSGDAIRKKEETHRMAEANRAFAHFR</sequence>
<keyword id="KW-0150">Chloroplast</keyword>
<keyword id="KW-0934">Plastid</keyword>
<keyword id="KW-0687">Ribonucleoprotein</keyword>
<keyword id="KW-0689">Ribosomal protein</keyword>
<keyword id="KW-0694">RNA-binding</keyword>
<keyword id="KW-0699">rRNA-binding</keyword>
<protein>
    <recommendedName>
        <fullName evidence="2">Small ribosomal subunit protein uS7cz/uS7cy</fullName>
    </recommendedName>
    <alternativeName>
        <fullName>30S ribosomal protein S7, chloroplastic</fullName>
    </alternativeName>
</protein>
<geneLocation type="chloroplast"/>
<feature type="chain" id="PRO_0000124468" description="Small ribosomal subunit protein uS7cz/uS7cy">
    <location>
        <begin position="1"/>
        <end position="155"/>
    </location>
</feature>
<accession>P69666</accession>
<accession>Q0G9G0</accession>
<accession>Q9G1K2</accession>
<organism>
    <name type="scientific">Liriodendron tulipifera</name>
    <name type="common">Tuliptree</name>
    <name type="synonym">Tulip poplar</name>
    <dbReference type="NCBI Taxonomy" id="3415"/>
    <lineage>
        <taxon>Eukaryota</taxon>
        <taxon>Viridiplantae</taxon>
        <taxon>Streptophyta</taxon>
        <taxon>Embryophyta</taxon>
        <taxon>Tracheophyta</taxon>
        <taxon>Spermatophyta</taxon>
        <taxon>Magnoliopsida</taxon>
        <taxon>Magnoliidae</taxon>
        <taxon>Magnoliales</taxon>
        <taxon>Magnoliaceae</taxon>
        <taxon>Liriodendron</taxon>
    </lineage>
</organism>
<proteinExistence type="inferred from homology"/>
<dbReference type="EMBL" id="AF123782">
    <property type="protein sequence ID" value="AAG26125.1"/>
    <property type="molecule type" value="Genomic_DNA"/>
</dbReference>
<dbReference type="EMBL" id="DQ899947">
    <property type="protein sequence ID" value="ABI32555.1"/>
    <property type="molecule type" value="Genomic_DNA"/>
</dbReference>
<dbReference type="EMBL" id="DQ899947">
    <property type="protein sequence ID" value="ABI32569.1"/>
    <property type="molecule type" value="Genomic_DNA"/>
</dbReference>
<dbReference type="SMR" id="P69666"/>
<dbReference type="GO" id="GO:0009507">
    <property type="term" value="C:chloroplast"/>
    <property type="evidence" value="ECO:0007669"/>
    <property type="project" value="UniProtKB-SubCell"/>
</dbReference>
<dbReference type="GO" id="GO:0015935">
    <property type="term" value="C:small ribosomal subunit"/>
    <property type="evidence" value="ECO:0007669"/>
    <property type="project" value="InterPro"/>
</dbReference>
<dbReference type="GO" id="GO:0019843">
    <property type="term" value="F:rRNA binding"/>
    <property type="evidence" value="ECO:0007669"/>
    <property type="project" value="UniProtKB-UniRule"/>
</dbReference>
<dbReference type="GO" id="GO:0003735">
    <property type="term" value="F:structural constituent of ribosome"/>
    <property type="evidence" value="ECO:0007669"/>
    <property type="project" value="InterPro"/>
</dbReference>
<dbReference type="GO" id="GO:0006412">
    <property type="term" value="P:translation"/>
    <property type="evidence" value="ECO:0007669"/>
    <property type="project" value="UniProtKB-UniRule"/>
</dbReference>
<dbReference type="CDD" id="cd14871">
    <property type="entry name" value="uS7_Chloroplast"/>
    <property type="match status" value="1"/>
</dbReference>
<dbReference type="FunFam" id="1.10.455.10:FF:000001">
    <property type="entry name" value="30S ribosomal protein S7"/>
    <property type="match status" value="1"/>
</dbReference>
<dbReference type="Gene3D" id="1.10.455.10">
    <property type="entry name" value="Ribosomal protein S7 domain"/>
    <property type="match status" value="1"/>
</dbReference>
<dbReference type="HAMAP" id="MF_00480_B">
    <property type="entry name" value="Ribosomal_uS7_B"/>
    <property type="match status" value="1"/>
</dbReference>
<dbReference type="InterPro" id="IPR000235">
    <property type="entry name" value="Ribosomal_uS7"/>
</dbReference>
<dbReference type="InterPro" id="IPR005717">
    <property type="entry name" value="Ribosomal_uS7_bac/org-type"/>
</dbReference>
<dbReference type="InterPro" id="IPR020606">
    <property type="entry name" value="Ribosomal_uS7_CS"/>
</dbReference>
<dbReference type="InterPro" id="IPR023798">
    <property type="entry name" value="Ribosomal_uS7_dom"/>
</dbReference>
<dbReference type="InterPro" id="IPR036823">
    <property type="entry name" value="Ribosomal_uS7_dom_sf"/>
</dbReference>
<dbReference type="NCBIfam" id="TIGR01029">
    <property type="entry name" value="rpsG_bact"/>
    <property type="match status" value="1"/>
</dbReference>
<dbReference type="PANTHER" id="PTHR11205">
    <property type="entry name" value="RIBOSOMAL PROTEIN S7"/>
    <property type="match status" value="1"/>
</dbReference>
<dbReference type="Pfam" id="PF00177">
    <property type="entry name" value="Ribosomal_S7"/>
    <property type="match status" value="1"/>
</dbReference>
<dbReference type="PIRSF" id="PIRSF002122">
    <property type="entry name" value="RPS7p_RPS7a_RPS5e_RPS7o"/>
    <property type="match status" value="1"/>
</dbReference>
<dbReference type="SUPFAM" id="SSF47973">
    <property type="entry name" value="Ribosomal protein S7"/>
    <property type="match status" value="1"/>
</dbReference>
<dbReference type="PROSITE" id="PS00052">
    <property type="entry name" value="RIBOSOMAL_S7"/>
    <property type="match status" value="1"/>
</dbReference>
<evidence type="ECO:0000250" key="1"/>
<evidence type="ECO:0000255" key="2">
    <source>
        <dbReference type="HAMAP-Rule" id="MF_00480"/>
    </source>
</evidence>
<evidence type="ECO:0000305" key="3"/>
<reference key="1">
    <citation type="journal article" date="2000" name="Am. J. Bot.">
        <title>Utility of 17 chloroplast genes for inferring the phylogeny of the basal angiosperms.</title>
        <authorList>
            <person name="Graham S.W."/>
            <person name="Olmstead R.G."/>
        </authorList>
    </citation>
    <scope>NUCLEOTIDE SEQUENCE [GENOMIC DNA]</scope>
</reference>
<reference key="2">
    <citation type="journal article" date="2006" name="BMC Evol. Biol.">
        <title>Complete plastid genome sequences of Drimys, Liriodendron, and Piper: implications for the phylogenetic relationships of magnoliids.</title>
        <authorList>
            <person name="Cai Z."/>
            <person name="Penaflor C."/>
            <person name="Kuehl J.V."/>
            <person name="Leebens-Mack J."/>
            <person name="Carlson J.E."/>
            <person name="dePamphilis C.W."/>
            <person name="Boore J.L."/>
            <person name="Jansen R.K."/>
        </authorList>
    </citation>
    <scope>NUCLEOTIDE SEQUENCE [LARGE SCALE GENOMIC DNA]</scope>
</reference>
<gene>
    <name type="primary">rps7-A</name>
</gene>
<gene>
    <name type="primary">rps7-B</name>
</gene>
<name>RR7_LIRTU</name>